<reference key="1">
    <citation type="journal article" date="2006" name="FEBS Lett.">
        <title>NAD+-specific D-arabinose dehydrogenase and its contribution to erythroascorbic acid production in Saccharomyces cerevisiae.</title>
        <authorList>
            <person name="Amako K."/>
            <person name="Fujita K."/>
            <person name="Shimohata T.A."/>
            <person name="Hasegawa E."/>
            <person name="Kishimoto R."/>
            <person name="Goda K."/>
        </authorList>
    </citation>
    <scope>NUCLEOTIDE SEQUENCE [GENOMIC DNA]</scope>
    <scope>FUNCTION</scope>
    <scope>BIOPHYSICOCHEMICAL PROPERTIES</scope>
</reference>
<reference key="2">
    <citation type="journal article" date="1997" name="Nature">
        <title>The nucleotide sequence of Saccharomyces cerevisiae chromosome XIII.</title>
        <authorList>
            <person name="Bowman S."/>
            <person name="Churcher C.M."/>
            <person name="Badcock K."/>
            <person name="Brown D."/>
            <person name="Chillingworth T."/>
            <person name="Connor R."/>
            <person name="Dedman K."/>
            <person name="Devlin K."/>
            <person name="Gentles S."/>
            <person name="Hamlin N."/>
            <person name="Hunt S."/>
            <person name="Jagels K."/>
            <person name="Lye G."/>
            <person name="Moule S."/>
            <person name="Odell C."/>
            <person name="Pearson D."/>
            <person name="Rajandream M.A."/>
            <person name="Rice P."/>
            <person name="Skelton J."/>
            <person name="Walsh S.V."/>
            <person name="Whitehead S."/>
            <person name="Barrell B.G."/>
        </authorList>
    </citation>
    <scope>NUCLEOTIDE SEQUENCE [LARGE SCALE GENOMIC DNA]</scope>
    <source>
        <strain>ATCC 204508 / S288c</strain>
    </source>
</reference>
<reference key="3">
    <citation type="journal article" date="2014" name="G3 (Bethesda)">
        <title>The reference genome sequence of Saccharomyces cerevisiae: Then and now.</title>
        <authorList>
            <person name="Engel S.R."/>
            <person name="Dietrich F.S."/>
            <person name="Fisk D.G."/>
            <person name="Binkley G."/>
            <person name="Balakrishnan R."/>
            <person name="Costanzo M.C."/>
            <person name="Dwight S.S."/>
            <person name="Hitz B.C."/>
            <person name="Karra K."/>
            <person name="Nash R.S."/>
            <person name="Weng S."/>
            <person name="Wong E.D."/>
            <person name="Lloyd P."/>
            <person name="Skrzypek M.S."/>
            <person name="Miyasato S.R."/>
            <person name="Simison M."/>
            <person name="Cherry J.M."/>
        </authorList>
    </citation>
    <scope>GENOME REANNOTATION</scope>
    <source>
        <strain>ATCC 204508 / S288c</strain>
    </source>
</reference>
<comment type="catalytic activity">
    <reaction>
        <text>D-arabinose + NAD(+) = D-arabinono-1,4-lactone + NADH + H(+)</text>
        <dbReference type="Rhea" id="RHEA:20457"/>
        <dbReference type="ChEBI" id="CHEBI:15378"/>
        <dbReference type="ChEBI" id="CHEBI:16292"/>
        <dbReference type="ChEBI" id="CHEBI:46994"/>
        <dbReference type="ChEBI" id="CHEBI:57540"/>
        <dbReference type="ChEBI" id="CHEBI:57945"/>
        <dbReference type="EC" id="1.1.1.116"/>
    </reaction>
</comment>
<comment type="biophysicochemical properties">
    <kinetics>
        <KM evidence="3">0.78 mM for D-arabinose</KM>
    </kinetics>
</comment>
<comment type="similarity">
    <text evidence="4">Belongs to the aldo/keto reductase family. Aldo/keto reductase 2 subfamily.</text>
</comment>
<accession>Q04212</accession>
<accession>D6VZL6</accession>
<accession>Q1XGQ6</accession>
<keyword id="KW-0520">NAD</keyword>
<keyword id="KW-0560">Oxidoreductase</keyword>
<keyword id="KW-1185">Reference proteome</keyword>
<evidence type="ECO:0000250" key="1"/>
<evidence type="ECO:0000255" key="2"/>
<evidence type="ECO:0000269" key="3">
    <source>
    </source>
</evidence>
<evidence type="ECO:0000305" key="4"/>
<organism>
    <name type="scientific">Saccharomyces cerevisiae (strain ATCC 204508 / S288c)</name>
    <name type="common">Baker's yeast</name>
    <dbReference type="NCBI Taxonomy" id="559292"/>
    <lineage>
        <taxon>Eukaryota</taxon>
        <taxon>Fungi</taxon>
        <taxon>Dikarya</taxon>
        <taxon>Ascomycota</taxon>
        <taxon>Saccharomycotina</taxon>
        <taxon>Saccharomycetes</taxon>
        <taxon>Saccharomycetales</taxon>
        <taxon>Saccharomycetaceae</taxon>
        <taxon>Saccharomyces</taxon>
    </lineage>
</organism>
<protein>
    <recommendedName>
        <fullName>D-arabinose 1-dehydrogenase</fullName>
        <ecNumber>1.1.1.116</ecNumber>
    </recommendedName>
    <alternativeName>
        <fullName>NAD(+)-specific D-arabinose dehydrogenase</fullName>
    </alternativeName>
</protein>
<proteinExistence type="evidence at protein level"/>
<dbReference type="EC" id="1.1.1.116"/>
<dbReference type="EMBL" id="AB237161">
    <property type="protein sequence ID" value="BAE93049.1"/>
    <property type="molecule type" value="Genomic_DNA"/>
</dbReference>
<dbReference type="EMBL" id="Z48502">
    <property type="protein sequence ID" value="CAA88407.1"/>
    <property type="molecule type" value="Genomic_DNA"/>
</dbReference>
<dbReference type="EMBL" id="BK006946">
    <property type="protein sequence ID" value="DAA09940.1"/>
    <property type="molecule type" value="Genomic_DNA"/>
</dbReference>
<dbReference type="PIR" id="S52890">
    <property type="entry name" value="S52890"/>
</dbReference>
<dbReference type="RefSeq" id="NP_013755.1">
    <property type="nucleotide sequence ID" value="NM_001182538.1"/>
</dbReference>
<dbReference type="SMR" id="Q04212"/>
<dbReference type="BioGRID" id="35213">
    <property type="interactions" value="29"/>
</dbReference>
<dbReference type="DIP" id="DIP-4506N"/>
<dbReference type="FunCoup" id="Q04212">
    <property type="interactions" value="298"/>
</dbReference>
<dbReference type="IntAct" id="Q04212">
    <property type="interactions" value="2"/>
</dbReference>
<dbReference type="MINT" id="Q04212"/>
<dbReference type="STRING" id="4932.YMR041C"/>
<dbReference type="iPTMnet" id="Q04212"/>
<dbReference type="PaxDb" id="4932-YMR041C"/>
<dbReference type="PeptideAtlas" id="Q04212"/>
<dbReference type="EnsemblFungi" id="YMR041C_mRNA">
    <property type="protein sequence ID" value="YMR041C"/>
    <property type="gene ID" value="YMR041C"/>
</dbReference>
<dbReference type="GeneID" id="855057"/>
<dbReference type="KEGG" id="sce:YMR041C"/>
<dbReference type="AGR" id="SGD:S000004644"/>
<dbReference type="SGD" id="S000004644">
    <property type="gene designation" value="ARA2"/>
</dbReference>
<dbReference type="VEuPathDB" id="FungiDB:YMR041C"/>
<dbReference type="eggNOG" id="KOG1576">
    <property type="taxonomic scope" value="Eukaryota"/>
</dbReference>
<dbReference type="GeneTree" id="ENSGT00390000005890"/>
<dbReference type="HOGENOM" id="CLU_023205_7_2_1"/>
<dbReference type="InParanoid" id="Q04212"/>
<dbReference type="OMA" id="FPRSSYK"/>
<dbReference type="OrthoDB" id="5286008at2759"/>
<dbReference type="BioCyc" id="MetaCyc:MONOMER3O-32"/>
<dbReference type="BioCyc" id="YEAST:MONOMER3O-32"/>
<dbReference type="BRENDA" id="1.1.1.116">
    <property type="organism ID" value="984"/>
</dbReference>
<dbReference type="SABIO-RK" id="Q04212"/>
<dbReference type="BioGRID-ORCS" id="855057">
    <property type="hits" value="9 hits in 10 CRISPR screens"/>
</dbReference>
<dbReference type="PRO" id="PR:Q04212"/>
<dbReference type="Proteomes" id="UP000002311">
    <property type="component" value="Chromosome XIII"/>
</dbReference>
<dbReference type="RNAct" id="Q04212">
    <property type="molecule type" value="protein"/>
</dbReference>
<dbReference type="GO" id="GO:0047816">
    <property type="term" value="F:D-arabinose 1-dehydrogenase (NAD+) activity"/>
    <property type="evidence" value="ECO:0007669"/>
    <property type="project" value="UniProtKB-EC"/>
</dbReference>
<dbReference type="GO" id="GO:0045290">
    <property type="term" value="F:D-arabinose 1-dehydrogenase [NAD(P)+] activity"/>
    <property type="evidence" value="ECO:0000314"/>
    <property type="project" value="SGD"/>
</dbReference>
<dbReference type="GO" id="GO:0070485">
    <property type="term" value="P:dehydro-D-arabinono-1,4-lactone biosynthetic process"/>
    <property type="evidence" value="ECO:0000315"/>
    <property type="project" value="SGD"/>
</dbReference>
<dbReference type="CDD" id="cd19164">
    <property type="entry name" value="AKR_ARA2"/>
    <property type="match status" value="1"/>
</dbReference>
<dbReference type="FunFam" id="3.20.20.100:FF:000041">
    <property type="entry name" value="D-arabinose 1-dehydrogenase"/>
    <property type="match status" value="1"/>
</dbReference>
<dbReference type="Gene3D" id="3.20.20.100">
    <property type="entry name" value="NADP-dependent oxidoreductase domain"/>
    <property type="match status" value="1"/>
</dbReference>
<dbReference type="InterPro" id="IPR020471">
    <property type="entry name" value="AKR"/>
</dbReference>
<dbReference type="InterPro" id="IPR044480">
    <property type="entry name" value="Ara2-like"/>
</dbReference>
<dbReference type="InterPro" id="IPR023210">
    <property type="entry name" value="NADP_OxRdtase_dom"/>
</dbReference>
<dbReference type="InterPro" id="IPR036812">
    <property type="entry name" value="NADP_OxRdtase_dom_sf"/>
</dbReference>
<dbReference type="PANTHER" id="PTHR42686">
    <property type="entry name" value="GH17980P-RELATED"/>
    <property type="match status" value="1"/>
</dbReference>
<dbReference type="PANTHER" id="PTHR42686:SF1">
    <property type="entry name" value="GH17980P-RELATED"/>
    <property type="match status" value="1"/>
</dbReference>
<dbReference type="Pfam" id="PF00248">
    <property type="entry name" value="Aldo_ket_red"/>
    <property type="match status" value="1"/>
</dbReference>
<dbReference type="SUPFAM" id="SSF51430">
    <property type="entry name" value="NAD(P)-linked oxidoreductase"/>
    <property type="match status" value="1"/>
</dbReference>
<feature type="chain" id="PRO_0000070372" description="D-arabinose 1-dehydrogenase">
    <location>
        <begin position="1"/>
        <end position="335"/>
    </location>
</feature>
<feature type="active site" description="Proton donor" evidence="1">
    <location>
        <position position="58"/>
    </location>
</feature>
<feature type="binding site" evidence="2">
    <location>
        <position position="124"/>
    </location>
    <ligand>
        <name>substrate</name>
    </ligand>
</feature>
<feature type="binding site" evidence="2">
    <location>
        <begin position="221"/>
        <end position="287"/>
    </location>
    <ligand>
        <name>NAD(+)</name>
        <dbReference type="ChEBI" id="CHEBI:57540"/>
    </ligand>
</feature>
<feature type="site" description="Lowers pKa of active site Tyr" evidence="1">
    <location>
        <position position="86"/>
    </location>
</feature>
<sequence>MVNEKVNPFDLASVSPLVLGGAILNQQYTDEPESIPLEDIIKYAFSHGINAIDTSPYYGPSEVLYGRALSNLRNEFPRDTYFICTKVGRIGAEEFNYSRDFVRFSVHRSCERLHTTYLDLVYLHDVEFVKFPDILEALKELRTLKNKGVIKNFGISGYPIDFITWLAEYCSTEESDIGSLDAVLSYCNLNLQNNKLLNFRERLLRNAKLKMVCNASILSMSLLRSQETRQFHPCSHELRECASQAAKYCQEQNVDLADLATRYAISEWVGKGPVVLGVSSMEELKLALDNYEIVKSNGNRLSSKDGQLVEYIQKNIFKEHFNEEWSSGIPHPEMI</sequence>
<gene>
    <name type="primary">ARA2</name>
    <name type="ordered locus">YMR041C</name>
    <name type="ORF">YM9532.06C</name>
</gene>
<name>ARA2_YEAST</name>